<name>MURQ_PSELT</name>
<reference key="1">
    <citation type="submission" date="2007-08" db="EMBL/GenBank/DDBJ databases">
        <title>Complete sequence of Thermotoga lettingae TMO.</title>
        <authorList>
            <consortium name="US DOE Joint Genome Institute"/>
            <person name="Copeland A."/>
            <person name="Lucas S."/>
            <person name="Lapidus A."/>
            <person name="Barry K."/>
            <person name="Glavina del Rio T."/>
            <person name="Dalin E."/>
            <person name="Tice H."/>
            <person name="Pitluck S."/>
            <person name="Foster B."/>
            <person name="Bruce D."/>
            <person name="Schmutz J."/>
            <person name="Larimer F."/>
            <person name="Land M."/>
            <person name="Hauser L."/>
            <person name="Kyrpides N."/>
            <person name="Mikhailova N."/>
            <person name="Nelson K."/>
            <person name="Gogarten J.P."/>
            <person name="Noll K."/>
            <person name="Richardson P."/>
        </authorList>
    </citation>
    <scope>NUCLEOTIDE SEQUENCE [LARGE SCALE GENOMIC DNA]</scope>
    <source>
        <strain>ATCC BAA-301 / DSM 14385 / NBRC 107922 / TMO</strain>
    </source>
</reference>
<evidence type="ECO:0000255" key="1">
    <source>
        <dbReference type="HAMAP-Rule" id="MF_00068"/>
    </source>
</evidence>
<organism>
    <name type="scientific">Pseudothermotoga lettingae (strain ATCC BAA-301 / DSM 14385 / NBRC 107922 / TMO)</name>
    <name type="common">Thermotoga lettingae</name>
    <dbReference type="NCBI Taxonomy" id="416591"/>
    <lineage>
        <taxon>Bacteria</taxon>
        <taxon>Thermotogati</taxon>
        <taxon>Thermotogota</taxon>
        <taxon>Thermotogae</taxon>
        <taxon>Thermotogales</taxon>
        <taxon>Thermotogaceae</taxon>
        <taxon>Pseudothermotoga</taxon>
    </lineage>
</organism>
<protein>
    <recommendedName>
        <fullName evidence="1">N-acetylmuramic acid 6-phosphate etherase</fullName>
        <shortName evidence="1">MurNAc-6-P etherase</shortName>
        <ecNumber evidence="1">4.2.1.126</ecNumber>
    </recommendedName>
    <alternativeName>
        <fullName evidence="1">N-acetylmuramic acid 6-phosphate hydrolase</fullName>
    </alternativeName>
    <alternativeName>
        <fullName evidence="1">N-acetylmuramic acid 6-phosphate lyase</fullName>
    </alternativeName>
</protein>
<keyword id="KW-0119">Carbohydrate metabolism</keyword>
<keyword id="KW-0456">Lyase</keyword>
<keyword id="KW-1185">Reference proteome</keyword>
<feature type="chain" id="PRO_1000118014" description="N-acetylmuramic acid 6-phosphate etherase">
    <location>
        <begin position="1"/>
        <end position="299"/>
    </location>
</feature>
<feature type="domain" description="SIS" evidence="1">
    <location>
        <begin position="55"/>
        <end position="218"/>
    </location>
</feature>
<feature type="active site" description="Proton donor" evidence="1">
    <location>
        <position position="83"/>
    </location>
</feature>
<feature type="active site" evidence="1">
    <location>
        <position position="114"/>
    </location>
</feature>
<accession>A8F7W0</accession>
<sequence length="299" mass="32721">MSLSNLPTEMVNPKTRNLDARDTFEILKLINEEDALVALAIREVLTEIDKVVQMCINCLEKNGRVFYVGAGTSGRVAYVDAVELIPTYSLQEGVFIPIIAGGTQALGKSVEGVEDDEEGGKNDLFSYKPSEKDVVIGIAASGRTPYVAGALRYAKQCGCKTALICNVRKPLLAEYADVVIAAETGPEVVAGSTRMKAGTAQKMILNMISTTVMVKMGKVYDNLMVDVMVLNEKLRERAQNIVTHITGVDKQTAEIYLKKADYNVKVAVLMILSKNDVEECRKILQDQSNLRKALQIAVR</sequence>
<proteinExistence type="inferred from homology"/>
<comment type="function">
    <text evidence="1">Specifically catalyzes the cleavage of the D-lactyl ether substituent of MurNAc 6-phosphate, producing GlcNAc 6-phosphate and D-lactate.</text>
</comment>
<comment type="catalytic activity">
    <reaction evidence="1">
        <text>N-acetyl-D-muramate 6-phosphate + H2O = N-acetyl-D-glucosamine 6-phosphate + (R)-lactate</text>
        <dbReference type="Rhea" id="RHEA:26410"/>
        <dbReference type="ChEBI" id="CHEBI:15377"/>
        <dbReference type="ChEBI" id="CHEBI:16004"/>
        <dbReference type="ChEBI" id="CHEBI:57513"/>
        <dbReference type="ChEBI" id="CHEBI:58722"/>
        <dbReference type="EC" id="4.2.1.126"/>
    </reaction>
</comment>
<comment type="pathway">
    <text evidence="1">Amino-sugar metabolism; N-acetylmuramate degradation.</text>
</comment>
<comment type="subunit">
    <text evidence="1">Homodimer.</text>
</comment>
<comment type="miscellaneous">
    <text evidence="1">A lyase-type mechanism (elimination/hydration) is suggested for the cleavage of the lactyl ether bond of MurNAc 6-phosphate, with the formation of an alpha,beta-unsaturated aldehyde intermediate with (E)-stereochemistry, followed by the syn addition of water to give product.</text>
</comment>
<comment type="similarity">
    <text evidence="1">Belongs to the GCKR-like family. MurNAc-6-P etherase subfamily.</text>
</comment>
<gene>
    <name evidence="1" type="primary">murQ</name>
    <name type="ordered locus">Tlet_1690</name>
</gene>
<dbReference type="EC" id="4.2.1.126" evidence="1"/>
<dbReference type="EMBL" id="CP000812">
    <property type="protein sequence ID" value="ABV34244.1"/>
    <property type="molecule type" value="Genomic_DNA"/>
</dbReference>
<dbReference type="RefSeq" id="WP_012003720.1">
    <property type="nucleotide sequence ID" value="NZ_BSDV01000001.1"/>
</dbReference>
<dbReference type="SMR" id="A8F7W0"/>
<dbReference type="STRING" id="416591.Tlet_1690"/>
<dbReference type="KEGG" id="tle:Tlet_1690"/>
<dbReference type="eggNOG" id="COG2103">
    <property type="taxonomic scope" value="Bacteria"/>
</dbReference>
<dbReference type="HOGENOM" id="CLU_049049_1_1_0"/>
<dbReference type="OrthoDB" id="9813395at2"/>
<dbReference type="UniPathway" id="UPA00342"/>
<dbReference type="Proteomes" id="UP000002016">
    <property type="component" value="Chromosome"/>
</dbReference>
<dbReference type="GO" id="GO:0097367">
    <property type="term" value="F:carbohydrate derivative binding"/>
    <property type="evidence" value="ECO:0007669"/>
    <property type="project" value="InterPro"/>
</dbReference>
<dbReference type="GO" id="GO:0016835">
    <property type="term" value="F:carbon-oxygen lyase activity"/>
    <property type="evidence" value="ECO:0007669"/>
    <property type="project" value="UniProtKB-UniRule"/>
</dbReference>
<dbReference type="GO" id="GO:0016803">
    <property type="term" value="F:ether hydrolase activity"/>
    <property type="evidence" value="ECO:0007669"/>
    <property type="project" value="TreeGrafter"/>
</dbReference>
<dbReference type="GO" id="GO:0046348">
    <property type="term" value="P:amino sugar catabolic process"/>
    <property type="evidence" value="ECO:0007669"/>
    <property type="project" value="InterPro"/>
</dbReference>
<dbReference type="GO" id="GO:0097173">
    <property type="term" value="P:N-acetylmuramic acid catabolic process"/>
    <property type="evidence" value="ECO:0007669"/>
    <property type="project" value="UniProtKB-UniPathway"/>
</dbReference>
<dbReference type="GO" id="GO:0009254">
    <property type="term" value="P:peptidoglycan turnover"/>
    <property type="evidence" value="ECO:0007669"/>
    <property type="project" value="TreeGrafter"/>
</dbReference>
<dbReference type="CDD" id="cd05007">
    <property type="entry name" value="SIS_Etherase"/>
    <property type="match status" value="1"/>
</dbReference>
<dbReference type="FunFam" id="3.40.50.10490:FF:000014">
    <property type="entry name" value="N-acetylmuramic acid 6-phosphate etherase"/>
    <property type="match status" value="1"/>
</dbReference>
<dbReference type="Gene3D" id="1.10.8.1080">
    <property type="match status" value="1"/>
</dbReference>
<dbReference type="Gene3D" id="3.40.50.10490">
    <property type="entry name" value="Glucose-6-phosphate isomerase like protein, domain 1"/>
    <property type="match status" value="1"/>
</dbReference>
<dbReference type="HAMAP" id="MF_00068">
    <property type="entry name" value="MurQ"/>
    <property type="match status" value="1"/>
</dbReference>
<dbReference type="InterPro" id="IPR005488">
    <property type="entry name" value="Etherase_MurQ"/>
</dbReference>
<dbReference type="InterPro" id="IPR005486">
    <property type="entry name" value="Glucokinase_regulatory_CS"/>
</dbReference>
<dbReference type="InterPro" id="IPR040190">
    <property type="entry name" value="MURQ/GCKR"/>
</dbReference>
<dbReference type="InterPro" id="IPR001347">
    <property type="entry name" value="SIS_dom"/>
</dbReference>
<dbReference type="InterPro" id="IPR046348">
    <property type="entry name" value="SIS_dom_sf"/>
</dbReference>
<dbReference type="NCBIfam" id="TIGR00274">
    <property type="entry name" value="N-acetylmuramic acid 6-phosphate etherase"/>
    <property type="match status" value="1"/>
</dbReference>
<dbReference type="NCBIfam" id="NF003915">
    <property type="entry name" value="PRK05441.1"/>
    <property type="match status" value="1"/>
</dbReference>
<dbReference type="NCBIfam" id="NF009222">
    <property type="entry name" value="PRK12570.1"/>
    <property type="match status" value="1"/>
</dbReference>
<dbReference type="PANTHER" id="PTHR10088">
    <property type="entry name" value="GLUCOKINASE REGULATORY PROTEIN"/>
    <property type="match status" value="1"/>
</dbReference>
<dbReference type="PANTHER" id="PTHR10088:SF4">
    <property type="entry name" value="GLUCOKINASE REGULATORY PROTEIN"/>
    <property type="match status" value="1"/>
</dbReference>
<dbReference type="Pfam" id="PF20741">
    <property type="entry name" value="GKRP-like_C"/>
    <property type="match status" value="1"/>
</dbReference>
<dbReference type="Pfam" id="PF22645">
    <property type="entry name" value="GKRP_SIS_N"/>
    <property type="match status" value="1"/>
</dbReference>
<dbReference type="SUPFAM" id="SSF53697">
    <property type="entry name" value="SIS domain"/>
    <property type="match status" value="1"/>
</dbReference>
<dbReference type="PROSITE" id="PS01272">
    <property type="entry name" value="GCKR"/>
    <property type="match status" value="1"/>
</dbReference>
<dbReference type="PROSITE" id="PS51464">
    <property type="entry name" value="SIS"/>
    <property type="match status" value="1"/>
</dbReference>